<feature type="peptide" id="PRO_0000421917" description="Bradykinin-potentiating peptide 11h">
    <location>
        <begin position="1"/>
        <end position="11"/>
    </location>
</feature>
<feature type="modified residue" description="Pyrrolidone carboxylic acid" evidence="1">
    <location>
        <position position="1"/>
    </location>
</feature>
<feature type="unsure residue" description="I or L">
    <location>
        <position position="7"/>
    </location>
</feature>
<name>BPPBH_BOTJA</name>
<sequence>QGRHPPIPPAP</sequence>
<comment type="function">
    <text evidence="1">This peptide evokes slight hypotension (-2 mmHg), when injected alone into rats. It has no bradykinin-potentiating effect, when 60 nmol of BPP-11h are coinjected with 0.5 ug of bradykinin into rats. It inhibits angiotensin converting enzyme (ACE) activity with a K(i)app of 87.07 uM.</text>
</comment>
<comment type="subcellular location">
    <subcellularLocation>
        <location>Secreted</location>
    </subcellularLocation>
</comment>
<comment type="tissue specificity">
    <text>Expressed by the venom gland.</text>
</comment>
<comment type="mass spectrometry"/>
<comment type="similarity">
    <text evidence="2">Belongs to the bradykinin-potentiating peptide family.</text>
</comment>
<keyword id="KW-0903">Direct protein sequencing</keyword>
<keyword id="KW-0382">Hypotensive agent</keyword>
<keyword id="KW-0481">Metalloenzyme inhibitor</keyword>
<keyword id="KW-0483">Metalloprotease inhibitor</keyword>
<keyword id="KW-0646">Protease inhibitor</keyword>
<keyword id="KW-0873">Pyrrolidone carboxylic acid</keyword>
<keyword id="KW-0964">Secreted</keyword>
<keyword id="KW-0800">Toxin</keyword>
<reference key="1">
    <citation type="journal article" date="2012" name="Mol. Cell. Proteomics">
        <title>Peptidomics of three Bothrops snake venoms: insights into the molecular diversification of proteomes and peptidomes.</title>
        <authorList>
            <person name="Tashima A.K."/>
            <person name="Zelanis A."/>
            <person name="Kitano E.S."/>
            <person name="Ianzer D."/>
            <person name="Melo R.L."/>
            <person name="Rioli V."/>
            <person name="Sant'anna S.S."/>
            <person name="Schenberg A.C."/>
            <person name="Camargo A.C."/>
            <person name="Serrano S.M.T."/>
        </authorList>
    </citation>
    <scope>PROTEIN SEQUENCE</scope>
    <scope>SYNTHESIS</scope>
    <scope>FUNCTION</scope>
    <scope>PYROGLUTAMATE FORMATION AT GLN-1</scope>
    <scope>MASS SPECTROMETRY</scope>
    <source>
        <tissue>Venom</tissue>
    </source>
</reference>
<organism>
    <name type="scientific">Bothrops jararaca</name>
    <name type="common">Jararaca</name>
    <name type="synonym">Bothrops jajaraca</name>
    <dbReference type="NCBI Taxonomy" id="8724"/>
    <lineage>
        <taxon>Eukaryota</taxon>
        <taxon>Metazoa</taxon>
        <taxon>Chordata</taxon>
        <taxon>Craniata</taxon>
        <taxon>Vertebrata</taxon>
        <taxon>Euteleostomi</taxon>
        <taxon>Lepidosauria</taxon>
        <taxon>Squamata</taxon>
        <taxon>Bifurcata</taxon>
        <taxon>Unidentata</taxon>
        <taxon>Episquamata</taxon>
        <taxon>Toxicofera</taxon>
        <taxon>Serpentes</taxon>
        <taxon>Colubroidea</taxon>
        <taxon>Viperidae</taxon>
        <taxon>Crotalinae</taxon>
        <taxon>Bothrops</taxon>
    </lineage>
</organism>
<evidence type="ECO:0000269" key="1">
    <source>
    </source>
</evidence>
<evidence type="ECO:0000305" key="2"/>
<protein>
    <recommendedName>
        <fullName>Bradykinin-potentiating peptide 11h</fullName>
        <shortName>BPP-11h</shortName>
    </recommendedName>
</protein>
<accession>P0DJK6</accession>
<dbReference type="GO" id="GO:0005576">
    <property type="term" value="C:extracellular region"/>
    <property type="evidence" value="ECO:0007669"/>
    <property type="project" value="UniProtKB-SubCell"/>
</dbReference>
<dbReference type="GO" id="GO:0030414">
    <property type="term" value="F:peptidase inhibitor activity"/>
    <property type="evidence" value="ECO:0007669"/>
    <property type="project" value="UniProtKB-KW"/>
</dbReference>
<dbReference type="GO" id="GO:0090729">
    <property type="term" value="F:toxin activity"/>
    <property type="evidence" value="ECO:0007669"/>
    <property type="project" value="UniProtKB-KW"/>
</dbReference>
<dbReference type="GO" id="GO:0008217">
    <property type="term" value="P:regulation of blood pressure"/>
    <property type="evidence" value="ECO:0007669"/>
    <property type="project" value="UniProtKB-KW"/>
</dbReference>
<proteinExistence type="evidence at protein level"/>